<feature type="chain" id="PRO_0000067814" description="DNA-directed RNA polymerase subunit beta'">
    <location>
        <begin position="1"/>
        <end position="1213"/>
    </location>
</feature>
<feature type="binding site" evidence="1">
    <location>
        <position position="60"/>
    </location>
    <ligand>
        <name>Zn(2+)</name>
        <dbReference type="ChEBI" id="CHEBI:29105"/>
        <label>1</label>
    </ligand>
</feature>
<feature type="binding site" evidence="1">
    <location>
        <position position="62"/>
    </location>
    <ligand>
        <name>Zn(2+)</name>
        <dbReference type="ChEBI" id="CHEBI:29105"/>
        <label>1</label>
    </ligand>
</feature>
<feature type="binding site" evidence="1">
    <location>
        <position position="75"/>
    </location>
    <ligand>
        <name>Zn(2+)</name>
        <dbReference type="ChEBI" id="CHEBI:29105"/>
        <label>1</label>
    </ligand>
</feature>
<feature type="binding site" evidence="1">
    <location>
        <position position="78"/>
    </location>
    <ligand>
        <name>Zn(2+)</name>
        <dbReference type="ChEBI" id="CHEBI:29105"/>
        <label>1</label>
    </ligand>
</feature>
<feature type="binding site" evidence="1">
    <location>
        <position position="450"/>
    </location>
    <ligand>
        <name>Mg(2+)</name>
        <dbReference type="ChEBI" id="CHEBI:18420"/>
    </ligand>
</feature>
<feature type="binding site" evidence="1">
    <location>
        <position position="452"/>
    </location>
    <ligand>
        <name>Mg(2+)</name>
        <dbReference type="ChEBI" id="CHEBI:18420"/>
    </ligand>
</feature>
<feature type="binding site" evidence="1">
    <location>
        <position position="454"/>
    </location>
    <ligand>
        <name>Mg(2+)</name>
        <dbReference type="ChEBI" id="CHEBI:18420"/>
    </ligand>
</feature>
<feature type="binding site" evidence="1">
    <location>
        <position position="819"/>
    </location>
    <ligand>
        <name>Zn(2+)</name>
        <dbReference type="ChEBI" id="CHEBI:29105"/>
        <label>2</label>
    </ligand>
</feature>
<feature type="binding site" evidence="1">
    <location>
        <position position="893"/>
    </location>
    <ligand>
        <name>Zn(2+)</name>
        <dbReference type="ChEBI" id="CHEBI:29105"/>
        <label>2</label>
    </ligand>
</feature>
<feature type="binding site" evidence="1">
    <location>
        <position position="900"/>
    </location>
    <ligand>
        <name>Zn(2+)</name>
        <dbReference type="ChEBI" id="CHEBI:29105"/>
        <label>2</label>
    </ligand>
</feature>
<feature type="binding site" evidence="1">
    <location>
        <position position="903"/>
    </location>
    <ligand>
        <name>Zn(2+)</name>
        <dbReference type="ChEBI" id="CHEBI:29105"/>
        <label>2</label>
    </ligand>
</feature>
<keyword id="KW-0240">DNA-directed RNA polymerase</keyword>
<keyword id="KW-0460">Magnesium</keyword>
<keyword id="KW-0479">Metal-binding</keyword>
<keyword id="KW-0548">Nucleotidyltransferase</keyword>
<keyword id="KW-0804">Transcription</keyword>
<keyword id="KW-0808">Transferase</keyword>
<keyword id="KW-0862">Zinc</keyword>
<comment type="function">
    <text evidence="1">DNA-dependent RNA polymerase catalyzes the transcription of DNA into RNA using the four ribonucleoside triphosphates as substrates.</text>
</comment>
<comment type="catalytic activity">
    <reaction evidence="1">
        <text>RNA(n) + a ribonucleoside 5'-triphosphate = RNA(n+1) + diphosphate</text>
        <dbReference type="Rhea" id="RHEA:21248"/>
        <dbReference type="Rhea" id="RHEA-COMP:14527"/>
        <dbReference type="Rhea" id="RHEA-COMP:17342"/>
        <dbReference type="ChEBI" id="CHEBI:33019"/>
        <dbReference type="ChEBI" id="CHEBI:61557"/>
        <dbReference type="ChEBI" id="CHEBI:140395"/>
        <dbReference type="EC" id="2.7.7.6"/>
    </reaction>
</comment>
<comment type="cofactor">
    <cofactor evidence="1">
        <name>Mg(2+)</name>
        <dbReference type="ChEBI" id="CHEBI:18420"/>
    </cofactor>
    <text evidence="1">Binds 1 Mg(2+) ion per subunit.</text>
</comment>
<comment type="cofactor">
    <cofactor evidence="1">
        <name>Zn(2+)</name>
        <dbReference type="ChEBI" id="CHEBI:29105"/>
    </cofactor>
    <text evidence="1">Binds 2 Zn(2+) ions per subunit.</text>
</comment>
<comment type="subunit">
    <text evidence="1">The RNAP catalytic core consists of 2 alpha, 1 beta, 1 beta' and 1 omega subunit. When a sigma factor is associated with the core the holoenzyme is formed, which can initiate transcription.</text>
</comment>
<comment type="similarity">
    <text evidence="1">Belongs to the RNA polymerase beta' chain family.</text>
</comment>
<name>RPOC_STRP8</name>
<evidence type="ECO:0000255" key="1">
    <source>
        <dbReference type="HAMAP-Rule" id="MF_01322"/>
    </source>
</evidence>
<organism>
    <name type="scientific">Streptococcus pyogenes serotype M18 (strain MGAS8232)</name>
    <dbReference type="NCBI Taxonomy" id="186103"/>
    <lineage>
        <taxon>Bacteria</taxon>
        <taxon>Bacillati</taxon>
        <taxon>Bacillota</taxon>
        <taxon>Bacilli</taxon>
        <taxon>Lactobacillales</taxon>
        <taxon>Streptococcaceae</taxon>
        <taxon>Streptococcus</taxon>
    </lineage>
</organism>
<accession>Q8P2Y2</accession>
<proteinExistence type="inferred from homology"/>
<reference key="1">
    <citation type="journal article" date="2002" name="Proc. Natl. Acad. Sci. U.S.A.">
        <title>Genome sequence and comparative microarray analysis of serotype M18 group A Streptococcus strains associated with acute rheumatic fever outbreaks.</title>
        <authorList>
            <person name="Smoot J.C."/>
            <person name="Barbian K.D."/>
            <person name="Van Gompel J.J."/>
            <person name="Smoot L.M."/>
            <person name="Chaussee M.S."/>
            <person name="Sylva G.L."/>
            <person name="Sturdevant D.E."/>
            <person name="Ricklefs S.M."/>
            <person name="Porcella S.F."/>
            <person name="Parkins L.D."/>
            <person name="Beres S.B."/>
            <person name="Campbell D.S."/>
            <person name="Smith T.M."/>
            <person name="Zhang Q."/>
            <person name="Kapur V."/>
            <person name="Daly J.A."/>
            <person name="Veasy L.G."/>
            <person name="Musser J.M."/>
        </authorList>
    </citation>
    <scope>NUCLEOTIDE SEQUENCE [LARGE SCALE GENOMIC DNA]</scope>
    <source>
        <strain>MGAS8232</strain>
    </source>
</reference>
<protein>
    <recommendedName>
        <fullName evidence="1">DNA-directed RNA polymerase subunit beta'</fullName>
        <shortName evidence="1">RNAP subunit beta'</shortName>
        <ecNumber evidence="1">2.7.7.6</ecNumber>
    </recommendedName>
    <alternativeName>
        <fullName evidence="1">RNA polymerase subunit beta'</fullName>
    </alternativeName>
    <alternativeName>
        <fullName evidence="1">Transcriptase subunit beta'</fullName>
    </alternativeName>
</protein>
<sequence length="1213" mass="135306">MVDVNRFKSMQITLASPSKVRSWSYGEVKKPETINYRTLKPEREGLFDEVIFGPTKDWECACGKYKRIRYKGIVCDRCGVEVTRAKVRRERMGHIELKAPVSHIWYFKGIPSRMGLTLDMSPRALEEVIYFAAYVVIDPKDTPLEPKSLLTEREYREKLQEYGHGSFVAKMGAEAIQDLLKRVDLAAEIAELKEELKSASGQKRIKAVRRLDVLDAFNKSGNKPEWMVLNILPVIPPDLRPMVQLDGGRFAASDLNDLYRRVINRNNRLARLLELNAPGIIVQNEKRMLQEAVDALIDNGRRGRPITGPGSRPLKSLSHMLKGKQGRFRQNLLGKRVDFSGRSVIAVGPTLKMYQCGVPREMAIELFKPFVMREIVAKEYAGNVKAAKRMVERGDERIWDILEEVIKEHPVLLNRAPTLHRLGIQAFEPVLIDGKALRLHPLVCEAYNADFDGDQMAIHVPLSEEAQAEARLLMLAAEHILNPKDGKPVVTPSQDMVLGNYYLTMEDAGREGEGMIFKDKDEAVMAYRNGYAHLHSRVGIAVDSMPNKPWKDSQRHKIMVTTVGKILFNDIMPEDLPYLQEPNNANLTEGTPDKYFLEPGQDIQEVIDGLEINVPFKKKNLGNIIAETFKRFRTTETSAFLDRLKDLGYYHSTLAGLTVGIADIPVIDNKAEIIDAAHHRVEEINKAFRRGLMTDDDRYVAVTTTWREAKEALEKRLIETQDPKNPIVMMMDSGARGNISNFSQLAGMRGLMAAPNGRIMELPILSNFREGLSVLEMFFSTHGARKGMTDTALKTADSGYLTRRLVDVAQDVIIREDDCGTDRGLLICAITDGKEVTETLEERLQGRYTRKSVKHPETGEVLIGADQLITEDMARKIVDAGVEEVTIRSVFTCATRHGVCRHCYGINLATGDAVEVGEAVGTIAAQSIGEPGTQLTMRTFHTGGVASNTDITQGLPRIQEIFEARNPKGEAVITEVKGNVVEIEEDASTRTKKVYVQGKTGMGEYVVPFTARMKVEVGDEVNRGAALTEGSIQPKRLLEVRDTLSVETYLLAEVQKVYRSQGVEIGDKHVEVMVRQMLRKVRVMDPGDTDLLPGTLMDISDFTDANKDIVISGGIPATSRPVLMGITKASLETNSFLSAASFQETTRVLTDAAIRGKKDHLLGLKENVIIGKIIPAGTGMARYRNIEPQAMNEIEVIDHTEVSAEAVFTAEAE</sequence>
<gene>
    <name evidence="1" type="primary">rpoC</name>
    <name type="ordered locus">spyM18_0100</name>
</gene>
<dbReference type="EC" id="2.7.7.6" evidence="1"/>
<dbReference type="EMBL" id="AE009949">
    <property type="protein sequence ID" value="AAL96913.1"/>
    <property type="molecule type" value="Genomic_DNA"/>
</dbReference>
<dbReference type="RefSeq" id="WP_011017249.1">
    <property type="nucleotide sequence ID" value="NC_003485.1"/>
</dbReference>
<dbReference type="SMR" id="Q8P2Y2"/>
<dbReference type="KEGG" id="spm:spyM18_0100"/>
<dbReference type="HOGENOM" id="CLU_000524_3_1_9"/>
<dbReference type="GO" id="GO:0000428">
    <property type="term" value="C:DNA-directed RNA polymerase complex"/>
    <property type="evidence" value="ECO:0007669"/>
    <property type="project" value="UniProtKB-KW"/>
</dbReference>
<dbReference type="GO" id="GO:0003677">
    <property type="term" value="F:DNA binding"/>
    <property type="evidence" value="ECO:0007669"/>
    <property type="project" value="UniProtKB-UniRule"/>
</dbReference>
<dbReference type="GO" id="GO:0003899">
    <property type="term" value="F:DNA-directed RNA polymerase activity"/>
    <property type="evidence" value="ECO:0007669"/>
    <property type="project" value="UniProtKB-UniRule"/>
</dbReference>
<dbReference type="GO" id="GO:0000287">
    <property type="term" value="F:magnesium ion binding"/>
    <property type="evidence" value="ECO:0007669"/>
    <property type="project" value="UniProtKB-UniRule"/>
</dbReference>
<dbReference type="GO" id="GO:0008270">
    <property type="term" value="F:zinc ion binding"/>
    <property type="evidence" value="ECO:0007669"/>
    <property type="project" value="UniProtKB-UniRule"/>
</dbReference>
<dbReference type="GO" id="GO:0006351">
    <property type="term" value="P:DNA-templated transcription"/>
    <property type="evidence" value="ECO:0007669"/>
    <property type="project" value="UniProtKB-UniRule"/>
</dbReference>
<dbReference type="CDD" id="cd02655">
    <property type="entry name" value="RNAP_beta'_C"/>
    <property type="match status" value="1"/>
</dbReference>
<dbReference type="CDD" id="cd01609">
    <property type="entry name" value="RNAP_beta'_N"/>
    <property type="match status" value="1"/>
</dbReference>
<dbReference type="FunFam" id="1.10.150.390:FF:000002">
    <property type="entry name" value="DNA-directed RNA polymerase subunit beta"/>
    <property type="match status" value="1"/>
</dbReference>
<dbReference type="FunFam" id="4.10.860.120:FF:000001">
    <property type="entry name" value="DNA-directed RNA polymerase subunit beta"/>
    <property type="match status" value="1"/>
</dbReference>
<dbReference type="Gene3D" id="1.10.132.30">
    <property type="match status" value="1"/>
</dbReference>
<dbReference type="Gene3D" id="1.10.150.390">
    <property type="match status" value="1"/>
</dbReference>
<dbReference type="Gene3D" id="1.10.1790.20">
    <property type="match status" value="1"/>
</dbReference>
<dbReference type="Gene3D" id="1.10.40.90">
    <property type="match status" value="1"/>
</dbReference>
<dbReference type="Gene3D" id="2.40.40.20">
    <property type="match status" value="1"/>
</dbReference>
<dbReference type="Gene3D" id="2.40.50.100">
    <property type="match status" value="1"/>
</dbReference>
<dbReference type="Gene3D" id="4.10.860.120">
    <property type="entry name" value="RNA polymerase II, clamp domain"/>
    <property type="match status" value="1"/>
</dbReference>
<dbReference type="Gene3D" id="1.10.274.100">
    <property type="entry name" value="RNA polymerase Rpb1, domain 3"/>
    <property type="match status" value="2"/>
</dbReference>
<dbReference type="HAMAP" id="MF_01322">
    <property type="entry name" value="RNApol_bact_RpoC"/>
    <property type="match status" value="1"/>
</dbReference>
<dbReference type="InterPro" id="IPR045867">
    <property type="entry name" value="DNA-dir_RpoC_beta_prime"/>
</dbReference>
<dbReference type="InterPro" id="IPR012754">
    <property type="entry name" value="DNA-dir_RpoC_beta_prime_bact"/>
</dbReference>
<dbReference type="InterPro" id="IPR000722">
    <property type="entry name" value="RNA_pol_asu"/>
</dbReference>
<dbReference type="InterPro" id="IPR006592">
    <property type="entry name" value="RNA_pol_N"/>
</dbReference>
<dbReference type="InterPro" id="IPR007080">
    <property type="entry name" value="RNA_pol_Rpb1_1"/>
</dbReference>
<dbReference type="InterPro" id="IPR007066">
    <property type="entry name" value="RNA_pol_Rpb1_3"/>
</dbReference>
<dbReference type="InterPro" id="IPR042102">
    <property type="entry name" value="RNA_pol_Rpb1_3_sf"/>
</dbReference>
<dbReference type="InterPro" id="IPR007083">
    <property type="entry name" value="RNA_pol_Rpb1_4"/>
</dbReference>
<dbReference type="InterPro" id="IPR007081">
    <property type="entry name" value="RNA_pol_Rpb1_5"/>
</dbReference>
<dbReference type="InterPro" id="IPR044893">
    <property type="entry name" value="RNA_pol_Rpb1_clamp_domain"/>
</dbReference>
<dbReference type="InterPro" id="IPR038120">
    <property type="entry name" value="Rpb1_funnel_sf"/>
</dbReference>
<dbReference type="NCBIfam" id="TIGR02386">
    <property type="entry name" value="rpoC_TIGR"/>
    <property type="match status" value="1"/>
</dbReference>
<dbReference type="PANTHER" id="PTHR19376">
    <property type="entry name" value="DNA-DIRECTED RNA POLYMERASE"/>
    <property type="match status" value="1"/>
</dbReference>
<dbReference type="PANTHER" id="PTHR19376:SF54">
    <property type="entry name" value="DNA-DIRECTED RNA POLYMERASE SUBUNIT BETA"/>
    <property type="match status" value="1"/>
</dbReference>
<dbReference type="Pfam" id="PF04997">
    <property type="entry name" value="RNA_pol_Rpb1_1"/>
    <property type="match status" value="1"/>
</dbReference>
<dbReference type="Pfam" id="PF00623">
    <property type="entry name" value="RNA_pol_Rpb1_2"/>
    <property type="match status" value="2"/>
</dbReference>
<dbReference type="Pfam" id="PF04983">
    <property type="entry name" value="RNA_pol_Rpb1_3"/>
    <property type="match status" value="1"/>
</dbReference>
<dbReference type="Pfam" id="PF05000">
    <property type="entry name" value="RNA_pol_Rpb1_4"/>
    <property type="match status" value="1"/>
</dbReference>
<dbReference type="Pfam" id="PF04998">
    <property type="entry name" value="RNA_pol_Rpb1_5"/>
    <property type="match status" value="1"/>
</dbReference>
<dbReference type="SMART" id="SM00663">
    <property type="entry name" value="RPOLA_N"/>
    <property type="match status" value="1"/>
</dbReference>
<dbReference type="SUPFAM" id="SSF64484">
    <property type="entry name" value="beta and beta-prime subunits of DNA dependent RNA-polymerase"/>
    <property type="match status" value="1"/>
</dbReference>